<keyword id="KW-0046">Antibiotic resistance</keyword>
<keyword id="KW-0963">Cytoplasm</keyword>
<keyword id="KW-0274">FAD</keyword>
<keyword id="KW-0285">Flavoprotein</keyword>
<keyword id="KW-0503">Monooxygenase</keyword>
<keyword id="KW-0521">NADP</keyword>
<keyword id="KW-0547">Nucleotide-binding</keyword>
<keyword id="KW-0560">Oxidoreductase</keyword>
<keyword id="KW-1185">Reference proteome</keyword>
<proteinExistence type="evidence at protein level"/>
<feature type="chain" id="PRO_0000448380" description="Flavin-dependent monooxygenase">
    <location>
        <begin position="1"/>
        <end position="475"/>
    </location>
</feature>
<protein>
    <recommendedName>
        <fullName evidence="5">Flavin-dependent monooxygenase</fullName>
    </recommendedName>
    <alternativeName>
        <fullName evidence="4">TetX monooxygenase</fullName>
        <shortName evidence="4">MabTetX</shortName>
        <ecNumber evidence="6">1.14.13.231</ecNumber>
    </alternativeName>
    <alternativeName>
        <fullName evidence="4">Tetracycline destructase</fullName>
    </alternativeName>
</protein>
<sequence length="475" mass="51510">MTVVIAGAGPTGLTLACELTRRGIACRVLDKAPDLFPGSRGKGLSPRTQEVFDDLGIAPAINSGGMAMPPFRIYAGHEVVAERSLVEMLGTDIPSGPGIPYPGFWLVPQWRTDEILLDRLRQFGGDVEFNCEVVGFTQRSDAVSVMVSQGGAPELLHASYLVGADGGRSTVRKMLGVGFAGETFERERTLIGDVRADGLEGSFCHVLTRDGQVSERFSLWNLPGSEHYQFVANMATEDVPALTLDAVQKLVVDRSGRDDIVLRDLRWISLYRVNARMVDRFRVGRVILAGDAAHVHSSAGGQGLNTSVQDAYNLGWKLAAVIYGAPEKLLDTYEEERMPVAASVLGLSTDLHHRNFAPAKGPAPQLHQMDITYRGCSLAVDDRVFQGNLRAGDRAPDALLDNGVRLFDVLRGTHFTLLTFGAQAPVIADVCIQQMTPSPDYDVTATTLVLVRPDGYIGVMTESGRTVLEYLARVV</sequence>
<evidence type="ECO:0000250" key="1">
    <source>
        <dbReference type="UniProtKB" id="Q01911"/>
    </source>
</evidence>
<evidence type="ECO:0000250" key="2">
    <source>
        <dbReference type="UniProtKB" id="Q93L51"/>
    </source>
</evidence>
<evidence type="ECO:0000269" key="3">
    <source>
    </source>
</evidence>
<evidence type="ECO:0000303" key="4">
    <source>
    </source>
</evidence>
<evidence type="ECO:0000305" key="5"/>
<evidence type="ECO:0000305" key="6">
    <source>
    </source>
</evidence>
<reference key="1">
    <citation type="journal article" date="2009" name="PLoS ONE">
        <title>Non mycobacterial virulence genes in the genome of the emerging pathogen Mycobacterium abscessus.</title>
        <authorList>
            <person name="Ripoll F."/>
            <person name="Pasek S."/>
            <person name="Schenowitz C."/>
            <person name="Dossat C."/>
            <person name="Barbe V."/>
            <person name="Rottman M."/>
            <person name="Macheras E."/>
            <person name="Heym B."/>
            <person name="Herrmann J.L."/>
            <person name="Daffe M."/>
            <person name="Brosch R."/>
            <person name="Risler J.L."/>
            <person name="Gaillard J.L."/>
        </authorList>
    </citation>
    <scope>NUCLEOTIDE SEQUENCE [LARGE SCALE GENOMIC DNA]</scope>
    <source>
        <strain>ATCC 19977 / DSM 44196 / CCUG 20993 / CIP 104536 / JCM 13569 / NCTC 13031 / TMC 1543 / L948</strain>
    </source>
</reference>
<reference key="2">
    <citation type="journal article" date="2018" name="Antimicrob. Agents Chemother.">
        <title>High Levels of Intrinsic Tetracycline Resistance in Mycobacterium abscessus Are Conferred by a Tetracycline-Modifying Monooxygenase.</title>
        <authorList>
            <person name="Rudra P."/>
            <person name="Hurst-Hess K."/>
            <person name="Lappierre P."/>
            <person name="Ghosh P."/>
        </authorList>
    </citation>
    <scope>FUNCTION IN INACTIVATING TETRACYCLINE</scope>
    <scope>NO ACTIVITY WITH TIGECYCLINE</scope>
    <scope>CATALYTIC ACTIVITY</scope>
    <scope>ACTIVITY REGULATION</scope>
    <scope>INDUCTION BY TETRACYCLINE</scope>
    <scope>OPERON</scope>
    <scope>DISRUPTION PHENOTYPE</scope>
</reference>
<dbReference type="EC" id="1.14.13.231" evidence="6"/>
<dbReference type="EMBL" id="CU458896">
    <property type="protein sequence ID" value="CAM61582.1"/>
    <property type="molecule type" value="Genomic_DNA"/>
</dbReference>
<dbReference type="RefSeq" id="WP_005114138.1">
    <property type="nucleotide sequence ID" value="NZ_MLCG01000002.1"/>
</dbReference>
<dbReference type="SMR" id="B1MM05"/>
<dbReference type="GeneID" id="93378445"/>
<dbReference type="KEGG" id="mab:MAB_1496c"/>
<dbReference type="Proteomes" id="UP000007137">
    <property type="component" value="Chromosome"/>
</dbReference>
<dbReference type="GO" id="GO:0005737">
    <property type="term" value="C:cytoplasm"/>
    <property type="evidence" value="ECO:0007669"/>
    <property type="project" value="UniProtKB-SubCell"/>
</dbReference>
<dbReference type="GO" id="GO:0071949">
    <property type="term" value="F:FAD binding"/>
    <property type="evidence" value="ECO:0007669"/>
    <property type="project" value="InterPro"/>
</dbReference>
<dbReference type="GO" id="GO:0016709">
    <property type="term" value="F:oxidoreductase activity, acting on paired donors, with incorporation or reduction of molecular oxygen, NAD(P)H as one donor, and incorporation of one atom of oxygen"/>
    <property type="evidence" value="ECO:0007669"/>
    <property type="project" value="UniProtKB-ARBA"/>
</dbReference>
<dbReference type="GO" id="GO:0046677">
    <property type="term" value="P:response to antibiotic"/>
    <property type="evidence" value="ECO:0007669"/>
    <property type="project" value="UniProtKB-KW"/>
</dbReference>
<dbReference type="Gene3D" id="3.30.70.2450">
    <property type="match status" value="1"/>
</dbReference>
<dbReference type="Gene3D" id="3.40.30.120">
    <property type="match status" value="1"/>
</dbReference>
<dbReference type="Gene3D" id="3.50.50.60">
    <property type="entry name" value="FAD/NAD(P)-binding domain"/>
    <property type="match status" value="1"/>
</dbReference>
<dbReference type="InterPro" id="IPR002938">
    <property type="entry name" value="FAD-bd"/>
</dbReference>
<dbReference type="InterPro" id="IPR036188">
    <property type="entry name" value="FAD/NAD-bd_sf"/>
</dbReference>
<dbReference type="InterPro" id="IPR050641">
    <property type="entry name" value="RIFMO-like"/>
</dbReference>
<dbReference type="NCBIfam" id="NF004832">
    <property type="entry name" value="PRK06184.1"/>
    <property type="match status" value="1"/>
</dbReference>
<dbReference type="PANTHER" id="PTHR43004:SF19">
    <property type="entry name" value="BINDING MONOOXYGENASE, PUTATIVE (JCVI)-RELATED"/>
    <property type="match status" value="1"/>
</dbReference>
<dbReference type="PANTHER" id="PTHR43004">
    <property type="entry name" value="TRK SYSTEM POTASSIUM UPTAKE PROTEIN"/>
    <property type="match status" value="1"/>
</dbReference>
<dbReference type="Pfam" id="PF01494">
    <property type="entry name" value="FAD_binding_3"/>
    <property type="match status" value="1"/>
</dbReference>
<dbReference type="PRINTS" id="PR00420">
    <property type="entry name" value="RNGMNOXGNASE"/>
</dbReference>
<dbReference type="SUPFAM" id="SSF51905">
    <property type="entry name" value="FAD/NAD(P)-binding domain"/>
    <property type="match status" value="1"/>
</dbReference>
<comment type="function">
    <text evidence="2 3">An FAD-requiring monooxygenase active on some tetracycline antibiotic derivatives, which leads to their inactivation. Hydroxylates carbon 11a of tetracycline and some analogs (By similarity). Confers resistance to tetracycline and doxycycline via an oxidoreductase activity; probably monooxygenates the antibiotics. Does not act on tigecycline (PubMed:29632012).</text>
</comment>
<comment type="catalytic activity">
    <reaction evidence="6">
        <text>a tetracycline + NADPH + O2 + H(+) = an 11a-hydroxytetracycline + NADP(+) + H2O</text>
        <dbReference type="Rhea" id="RHEA:61444"/>
        <dbReference type="ChEBI" id="CHEBI:15377"/>
        <dbReference type="ChEBI" id="CHEBI:15378"/>
        <dbReference type="ChEBI" id="CHEBI:15379"/>
        <dbReference type="ChEBI" id="CHEBI:57783"/>
        <dbReference type="ChEBI" id="CHEBI:58349"/>
        <dbReference type="ChEBI" id="CHEBI:144644"/>
        <dbReference type="ChEBI" id="CHEBI:144645"/>
    </reaction>
</comment>
<comment type="catalytic activity">
    <reaction evidence="6">
        <text>tetracycline + NADPH + O2 + H(+) = 11a-hydroxytetracycline + NADP(+) + H2O</text>
        <dbReference type="Rhea" id="RHEA:50004"/>
        <dbReference type="ChEBI" id="CHEBI:15377"/>
        <dbReference type="ChEBI" id="CHEBI:15378"/>
        <dbReference type="ChEBI" id="CHEBI:15379"/>
        <dbReference type="ChEBI" id="CHEBI:57783"/>
        <dbReference type="ChEBI" id="CHEBI:58349"/>
        <dbReference type="ChEBI" id="CHEBI:77932"/>
        <dbReference type="ChEBI" id="CHEBI:132727"/>
        <dbReference type="EC" id="1.14.13.231"/>
    </reaction>
</comment>
<comment type="cofactor">
    <cofactor evidence="5">
        <name>FAD</name>
        <dbReference type="ChEBI" id="CHEBI:57692"/>
    </cofactor>
</comment>
<comment type="activity regulation">
    <text evidence="3">Inhibited by anhydrotetracycline.</text>
</comment>
<comment type="subcellular location">
    <subcellularLocation>
        <location evidence="1">Cytoplasm</location>
    </subcellularLocation>
</comment>
<comment type="induction">
    <text evidence="3">Expression increases &gt;200-fold after exposure to tetracycline, doxycycline or inhibitor anhydrotetracycline but not tigecycline; expression is repressed by upstream TetR (MAB_1497c), is not under control of whiB7. Probably part of the TetR-TetX operon.</text>
</comment>
<comment type="disruption phenotype">
    <text evidence="3">Cells are about 2-fold more sensitive to tetracycline and doxycycline, but remain sensitive to tigecycline, a broad spectrum glycylcycline antibiotic.</text>
</comment>
<comment type="miscellaneous">
    <text evidence="6">Although it has a similar activity to Bacteroides TetX it is phylogentically distinct and is thought to have evolved by convergent evolution.</text>
</comment>
<comment type="similarity">
    <text evidence="5">Belongs to the aromatic-ring hydroxylase family.</text>
</comment>
<organism>
    <name type="scientific">Mycobacteroides abscessus (strain ATCC 19977 / DSM 44196 / CCUG 20993 / CIP 104536 / JCM 13569 / NCTC 13031 / TMC 1543 / L948)</name>
    <name type="common">Mycobacterium abscessus</name>
    <dbReference type="NCBI Taxonomy" id="561007"/>
    <lineage>
        <taxon>Bacteria</taxon>
        <taxon>Bacillati</taxon>
        <taxon>Actinomycetota</taxon>
        <taxon>Actinomycetes</taxon>
        <taxon>Mycobacteriales</taxon>
        <taxon>Mycobacteriaceae</taxon>
        <taxon>Mycobacteroides</taxon>
        <taxon>Mycobacteroides abscessus</taxon>
    </lineage>
</organism>
<accession>B1MM05</accession>
<gene>
    <name evidence="5" type="primary">tetX</name>
    <name type="ordered locus">MAB_1496c</name>
</gene>
<name>TETX_MYCA9</name>